<feature type="chain" id="PRO_0000384547" description="Uncharacterized protein ORF80">
    <location>
        <begin position="1"/>
        <end position="80"/>
    </location>
</feature>
<dbReference type="EMBL" id="AJ567472">
    <property type="protein sequence ID" value="CAD98963.1"/>
    <property type="molecule type" value="Genomic_DNA"/>
</dbReference>
<dbReference type="RefSeq" id="YP_003759.1">
    <property type="nucleotide sequence ID" value="NC_005830.1"/>
</dbReference>
<dbReference type="SMR" id="Q70LB7"/>
<dbReference type="KEGG" id="vg:2769170"/>
<dbReference type="Proteomes" id="UP000000514">
    <property type="component" value="Genome"/>
</dbReference>
<name>Y080_AFV1Y</name>
<organism>
    <name type="scientific">Acidianus filamentous virus 1 (isolate United States/Yellowstone)</name>
    <name type="common">AFV-1</name>
    <dbReference type="NCBI Taxonomy" id="654909"/>
    <lineage>
        <taxon>Viruses</taxon>
        <taxon>Adnaviria</taxon>
        <taxon>Zilligvirae</taxon>
        <taxon>Taleaviricota</taxon>
        <taxon>Tokiviricetes</taxon>
        <taxon>Ligamenvirales</taxon>
        <taxon>Ungulaviridae</taxon>
        <taxon>Captovirus</taxon>
        <taxon>Acidianus filamentous virus 1</taxon>
    </lineage>
</organism>
<reference key="1">
    <citation type="journal article" date="2003" name="Virology">
        <title>AFV1, a novel virus infecting hyperthermophilic archaea of the genus acidianus.</title>
        <authorList>
            <person name="Bettstetter M."/>
            <person name="Peng X."/>
            <person name="Garrett R.A."/>
            <person name="Prangishvili D."/>
        </authorList>
    </citation>
    <scope>NUCLEOTIDE SEQUENCE [GENOMIC DNA]</scope>
</reference>
<protein>
    <recommendedName>
        <fullName>Uncharacterized protein ORF80</fullName>
    </recommendedName>
</protein>
<organismHost>
    <name type="scientific">Acidianus hospitalis</name>
    <dbReference type="NCBI Taxonomy" id="563177"/>
</organismHost>
<organismHost>
    <name type="scientific">Acidianus infernus</name>
    <dbReference type="NCBI Taxonomy" id="12915"/>
</organismHost>
<gene>
    <name type="ORF">ORF80</name>
</gene>
<sequence length="80" mass="9451">MSDFPSKQFYNWFKENFGYTRLQRLDKCIDTYGSLENCVKEIMTVAFDDIENEHDSVDELFWGLIKKVMSNKAISSPDNR</sequence>
<keyword id="KW-1185">Reference proteome</keyword>
<accession>Q70LB7</accession>
<proteinExistence type="predicted"/>